<proteinExistence type="evidence at transcript level"/>
<comment type="function">
    <text evidence="2">JanA and janB regulate somatic sex differentiation.</text>
</comment>
<comment type="tissue specificity">
    <text>Germline cells of adult males.</text>
</comment>
<comment type="developmental stage">
    <text>From the third-instar larval stage to the adult stage.</text>
</comment>
<comment type="similarity">
    <text evidence="3">Belongs to the janus family.</text>
</comment>
<feature type="chain" id="PRO_0000206166" description="Sex-regulated protein janus-B">
    <location>
        <begin position="1"/>
        <end position="140"/>
    </location>
</feature>
<feature type="active site" description="Proton acceptor" evidence="1">
    <location>
        <position position="69"/>
    </location>
</feature>
<feature type="binding site" evidence="1">
    <location>
        <position position="42"/>
    </location>
    <ligand>
        <name>substrate</name>
    </ligand>
</feature>
<feature type="binding site" evidence="1">
    <location>
        <begin position="110"/>
        <end position="112"/>
    </location>
    <ligand>
        <name>substrate</name>
    </ligand>
</feature>
<feature type="sequence variant" description="In strain: ZBMEL131.">
    <original>H</original>
    <variation>N</variation>
    <location>
        <position position="49"/>
    </location>
</feature>
<feature type="sequence variant" description="In strain: ZBMEL145 and ZBMEL186.">
    <original>L</original>
    <variation>M</variation>
    <location>
        <position position="70"/>
    </location>
</feature>
<feature type="sequence variant" description="In strain: ZBMEL84.">
    <original>AE</original>
    <variation>ED</variation>
    <location>
        <begin position="99"/>
        <end position="100"/>
    </location>
</feature>
<feature type="sequence variant" description="In strain: ZBMEL95.">
    <original>T</original>
    <variation>A</variation>
    <location>
        <position position="119"/>
    </location>
</feature>
<feature type="sequence variant" description="In strain: ZBMEL229.">
    <original>K</original>
    <variation>T</variation>
    <location>
        <position position="139"/>
    </location>
</feature>
<name>JANB_DROME</name>
<organism>
    <name type="scientific">Drosophila melanogaster</name>
    <name type="common">Fruit fly</name>
    <dbReference type="NCBI Taxonomy" id="7227"/>
    <lineage>
        <taxon>Eukaryota</taxon>
        <taxon>Metazoa</taxon>
        <taxon>Ecdysozoa</taxon>
        <taxon>Arthropoda</taxon>
        <taxon>Hexapoda</taxon>
        <taxon>Insecta</taxon>
        <taxon>Pterygota</taxon>
        <taxon>Neoptera</taxon>
        <taxon>Endopterygota</taxon>
        <taxon>Diptera</taxon>
        <taxon>Brachycera</taxon>
        <taxon>Muscomorpha</taxon>
        <taxon>Ephydroidea</taxon>
        <taxon>Drosophilidae</taxon>
        <taxon>Drosophila</taxon>
        <taxon>Sophophora</taxon>
    </lineage>
</organism>
<reference key="1">
    <citation type="journal article" date="1989" name="Mol. Cell. Biol.">
        <title>Transcriptional and posttranscriptional regulation contributes to the sex-regulated expression of two sequence-related genes at the janus locus of Drosophila melanogaster.</title>
        <authorList>
            <person name="Yanicostas C."/>
            <person name="Vincent A."/>
            <person name="Lepesant J.-A."/>
        </authorList>
    </citation>
    <scope>NUCLEOTIDE SEQUENCE [GENOMIC DNA]</scope>
    <scope>FUNCTION</scope>
    <source>
        <strain>Canton-S</strain>
    </source>
</reference>
<reference key="2">
    <citation type="journal article" date="2006" name="Genetics">
        <title>Widespread adaptive evolution of Drosophila genes with sex-biased expression.</title>
        <authorList>
            <person name="Proeschel M."/>
            <person name="Zhang Z."/>
            <person name="Parsch J."/>
        </authorList>
    </citation>
    <scope>NUCLEOTIDE SEQUENCE [GENOMIC DNA]</scope>
    <source>
        <strain>ZBMEL131</strain>
        <strain>ZBMEL145</strain>
        <strain>ZBMEL157</strain>
        <strain>ZBMEL186</strain>
        <strain>ZBMEL191</strain>
        <strain>ZBMEL229</strain>
        <strain>ZBMEL377</strain>
        <strain>ZBMEL384</strain>
        <strain>ZBMEL398</strain>
        <strain>ZBMEL82</strain>
        <strain>ZBMEL84</strain>
        <strain>ZBMEL95</strain>
    </source>
</reference>
<reference key="3">
    <citation type="journal article" date="2000" name="Science">
        <title>The genome sequence of Drosophila melanogaster.</title>
        <authorList>
            <person name="Adams M.D."/>
            <person name="Celniker S.E."/>
            <person name="Holt R.A."/>
            <person name="Evans C.A."/>
            <person name="Gocayne J.D."/>
            <person name="Amanatides P.G."/>
            <person name="Scherer S.E."/>
            <person name="Li P.W."/>
            <person name="Hoskins R.A."/>
            <person name="Galle R.F."/>
            <person name="George R.A."/>
            <person name="Lewis S.E."/>
            <person name="Richards S."/>
            <person name="Ashburner M."/>
            <person name="Henderson S.N."/>
            <person name="Sutton G.G."/>
            <person name="Wortman J.R."/>
            <person name="Yandell M.D."/>
            <person name="Zhang Q."/>
            <person name="Chen L.X."/>
            <person name="Brandon R.C."/>
            <person name="Rogers Y.-H.C."/>
            <person name="Blazej R.G."/>
            <person name="Champe M."/>
            <person name="Pfeiffer B.D."/>
            <person name="Wan K.H."/>
            <person name="Doyle C."/>
            <person name="Baxter E.G."/>
            <person name="Helt G."/>
            <person name="Nelson C.R."/>
            <person name="Miklos G.L.G."/>
            <person name="Abril J.F."/>
            <person name="Agbayani A."/>
            <person name="An H.-J."/>
            <person name="Andrews-Pfannkoch C."/>
            <person name="Baldwin D."/>
            <person name="Ballew R.M."/>
            <person name="Basu A."/>
            <person name="Baxendale J."/>
            <person name="Bayraktaroglu L."/>
            <person name="Beasley E.M."/>
            <person name="Beeson K.Y."/>
            <person name="Benos P.V."/>
            <person name="Berman B.P."/>
            <person name="Bhandari D."/>
            <person name="Bolshakov S."/>
            <person name="Borkova D."/>
            <person name="Botchan M.R."/>
            <person name="Bouck J."/>
            <person name="Brokstein P."/>
            <person name="Brottier P."/>
            <person name="Burtis K.C."/>
            <person name="Busam D.A."/>
            <person name="Butler H."/>
            <person name="Cadieu E."/>
            <person name="Center A."/>
            <person name="Chandra I."/>
            <person name="Cherry J.M."/>
            <person name="Cawley S."/>
            <person name="Dahlke C."/>
            <person name="Davenport L.B."/>
            <person name="Davies P."/>
            <person name="de Pablos B."/>
            <person name="Delcher A."/>
            <person name="Deng Z."/>
            <person name="Mays A.D."/>
            <person name="Dew I."/>
            <person name="Dietz S.M."/>
            <person name="Dodson K."/>
            <person name="Doup L.E."/>
            <person name="Downes M."/>
            <person name="Dugan-Rocha S."/>
            <person name="Dunkov B.C."/>
            <person name="Dunn P."/>
            <person name="Durbin K.J."/>
            <person name="Evangelista C.C."/>
            <person name="Ferraz C."/>
            <person name="Ferriera S."/>
            <person name="Fleischmann W."/>
            <person name="Fosler C."/>
            <person name="Gabrielian A.E."/>
            <person name="Garg N.S."/>
            <person name="Gelbart W.M."/>
            <person name="Glasser K."/>
            <person name="Glodek A."/>
            <person name="Gong F."/>
            <person name="Gorrell J.H."/>
            <person name="Gu Z."/>
            <person name="Guan P."/>
            <person name="Harris M."/>
            <person name="Harris N.L."/>
            <person name="Harvey D.A."/>
            <person name="Heiman T.J."/>
            <person name="Hernandez J.R."/>
            <person name="Houck J."/>
            <person name="Hostin D."/>
            <person name="Houston K.A."/>
            <person name="Howland T.J."/>
            <person name="Wei M.-H."/>
            <person name="Ibegwam C."/>
            <person name="Jalali M."/>
            <person name="Kalush F."/>
            <person name="Karpen G.H."/>
            <person name="Ke Z."/>
            <person name="Kennison J.A."/>
            <person name="Ketchum K.A."/>
            <person name="Kimmel B.E."/>
            <person name="Kodira C.D."/>
            <person name="Kraft C.L."/>
            <person name="Kravitz S."/>
            <person name="Kulp D."/>
            <person name="Lai Z."/>
            <person name="Lasko P."/>
            <person name="Lei Y."/>
            <person name="Levitsky A.A."/>
            <person name="Li J.H."/>
            <person name="Li Z."/>
            <person name="Liang Y."/>
            <person name="Lin X."/>
            <person name="Liu X."/>
            <person name="Mattei B."/>
            <person name="McIntosh T.C."/>
            <person name="McLeod M.P."/>
            <person name="McPherson D."/>
            <person name="Merkulov G."/>
            <person name="Milshina N.V."/>
            <person name="Mobarry C."/>
            <person name="Morris J."/>
            <person name="Moshrefi A."/>
            <person name="Mount S.M."/>
            <person name="Moy M."/>
            <person name="Murphy B."/>
            <person name="Murphy L."/>
            <person name="Muzny D.M."/>
            <person name="Nelson D.L."/>
            <person name="Nelson D.R."/>
            <person name="Nelson K.A."/>
            <person name="Nixon K."/>
            <person name="Nusskern D.R."/>
            <person name="Pacleb J.M."/>
            <person name="Palazzolo M."/>
            <person name="Pittman G.S."/>
            <person name="Pan S."/>
            <person name="Pollard J."/>
            <person name="Puri V."/>
            <person name="Reese M.G."/>
            <person name="Reinert K."/>
            <person name="Remington K."/>
            <person name="Saunders R.D.C."/>
            <person name="Scheeler F."/>
            <person name="Shen H."/>
            <person name="Shue B.C."/>
            <person name="Siden-Kiamos I."/>
            <person name="Simpson M."/>
            <person name="Skupski M.P."/>
            <person name="Smith T.J."/>
            <person name="Spier E."/>
            <person name="Spradling A.C."/>
            <person name="Stapleton M."/>
            <person name="Strong R."/>
            <person name="Sun E."/>
            <person name="Svirskas R."/>
            <person name="Tector C."/>
            <person name="Turner R."/>
            <person name="Venter E."/>
            <person name="Wang A.H."/>
            <person name="Wang X."/>
            <person name="Wang Z.-Y."/>
            <person name="Wassarman D.A."/>
            <person name="Weinstock G.M."/>
            <person name="Weissenbach J."/>
            <person name="Williams S.M."/>
            <person name="Woodage T."/>
            <person name="Worley K.C."/>
            <person name="Wu D."/>
            <person name="Yang S."/>
            <person name="Yao Q.A."/>
            <person name="Ye J."/>
            <person name="Yeh R.-F."/>
            <person name="Zaveri J.S."/>
            <person name="Zhan M."/>
            <person name="Zhang G."/>
            <person name="Zhao Q."/>
            <person name="Zheng L."/>
            <person name="Zheng X.H."/>
            <person name="Zhong F.N."/>
            <person name="Zhong W."/>
            <person name="Zhou X."/>
            <person name="Zhu S.C."/>
            <person name="Zhu X."/>
            <person name="Smith H.O."/>
            <person name="Gibbs R.A."/>
            <person name="Myers E.W."/>
            <person name="Rubin G.M."/>
            <person name="Venter J.C."/>
        </authorList>
    </citation>
    <scope>NUCLEOTIDE SEQUENCE [LARGE SCALE GENOMIC DNA]</scope>
    <source>
        <strain>Berkeley</strain>
    </source>
</reference>
<reference key="4">
    <citation type="journal article" date="2002" name="Genome Biol.">
        <title>Annotation of the Drosophila melanogaster euchromatic genome: a systematic review.</title>
        <authorList>
            <person name="Misra S."/>
            <person name="Crosby M.A."/>
            <person name="Mungall C.J."/>
            <person name="Matthews B.B."/>
            <person name="Campbell K.S."/>
            <person name="Hradecky P."/>
            <person name="Huang Y."/>
            <person name="Kaminker J.S."/>
            <person name="Millburn G.H."/>
            <person name="Prochnik S.E."/>
            <person name="Smith C.D."/>
            <person name="Tupy J.L."/>
            <person name="Whitfield E.J."/>
            <person name="Bayraktaroglu L."/>
            <person name="Berman B.P."/>
            <person name="Bettencourt B.R."/>
            <person name="Celniker S.E."/>
            <person name="de Grey A.D.N.J."/>
            <person name="Drysdale R.A."/>
            <person name="Harris N.L."/>
            <person name="Richter J."/>
            <person name="Russo S."/>
            <person name="Schroeder A.J."/>
            <person name="Shu S.Q."/>
            <person name="Stapleton M."/>
            <person name="Yamada C."/>
            <person name="Ashburner M."/>
            <person name="Gelbart W.M."/>
            <person name="Rubin G.M."/>
            <person name="Lewis S.E."/>
        </authorList>
    </citation>
    <scope>GENOME REANNOTATION</scope>
    <source>
        <strain>Berkeley</strain>
    </source>
</reference>
<protein>
    <recommendedName>
        <fullName>Sex-regulated protein janus-B</fullName>
    </recommendedName>
</protein>
<sequence length="140" mass="15860">MKMFKSLRLLPHIVSPFQKCYSTDLISLVGVPRVKITKGQNRYLLVNIHTHGFTKYGRVIVRGADVDNHLAVFDSILEELEPEGICAKILGGGRILNEAENKKIKIYGTSRTFGGADHTRTRNILQAWTTYKDFKITVKQ</sequence>
<evidence type="ECO:0000250" key="1"/>
<evidence type="ECO:0000269" key="2">
    <source>
    </source>
</evidence>
<evidence type="ECO:0000305" key="3"/>
<dbReference type="EMBL" id="M27033">
    <property type="protein sequence ID" value="AAC34204.1"/>
    <property type="molecule type" value="Genomic_DNA"/>
</dbReference>
<dbReference type="EMBL" id="AM294212">
    <property type="protein sequence ID" value="CAL26116.1"/>
    <property type="molecule type" value="Genomic_DNA"/>
</dbReference>
<dbReference type="EMBL" id="AM294213">
    <property type="protein sequence ID" value="CAL26117.1"/>
    <property type="molecule type" value="Genomic_DNA"/>
</dbReference>
<dbReference type="EMBL" id="AM294214">
    <property type="protein sequence ID" value="CAL26118.1"/>
    <property type="molecule type" value="Genomic_DNA"/>
</dbReference>
<dbReference type="EMBL" id="AM294215">
    <property type="protein sequence ID" value="CAL26119.1"/>
    <property type="molecule type" value="Genomic_DNA"/>
</dbReference>
<dbReference type="EMBL" id="AM294216">
    <property type="protein sequence ID" value="CAL26120.1"/>
    <property type="molecule type" value="Genomic_DNA"/>
</dbReference>
<dbReference type="EMBL" id="AM294217">
    <property type="protein sequence ID" value="CAL26121.1"/>
    <property type="molecule type" value="Genomic_DNA"/>
</dbReference>
<dbReference type="EMBL" id="AM294218">
    <property type="protein sequence ID" value="CAL26122.1"/>
    <property type="molecule type" value="Genomic_DNA"/>
</dbReference>
<dbReference type="EMBL" id="AM294219">
    <property type="protein sequence ID" value="CAL26123.1"/>
    <property type="molecule type" value="Genomic_DNA"/>
</dbReference>
<dbReference type="EMBL" id="AM294220">
    <property type="protein sequence ID" value="CAL26124.1"/>
    <property type="molecule type" value="Genomic_DNA"/>
</dbReference>
<dbReference type="EMBL" id="AM294221">
    <property type="protein sequence ID" value="CAL26125.1"/>
    <property type="molecule type" value="Genomic_DNA"/>
</dbReference>
<dbReference type="EMBL" id="AM294222">
    <property type="protein sequence ID" value="CAL26126.1"/>
    <property type="molecule type" value="Genomic_DNA"/>
</dbReference>
<dbReference type="EMBL" id="AM294223">
    <property type="protein sequence ID" value="CAL26127.1"/>
    <property type="molecule type" value="Genomic_DNA"/>
</dbReference>
<dbReference type="EMBL" id="AE014297">
    <property type="protein sequence ID" value="AAF56997.3"/>
    <property type="molecule type" value="Genomic_DNA"/>
</dbReference>
<dbReference type="PIR" id="B32317">
    <property type="entry name" value="B32317"/>
</dbReference>
<dbReference type="RefSeq" id="NP_476584.2">
    <property type="nucleotide sequence ID" value="NM_057236.5"/>
</dbReference>
<dbReference type="SMR" id="P20349"/>
<dbReference type="BioGRID" id="68424">
    <property type="interactions" value="2"/>
</dbReference>
<dbReference type="DIP" id="DIP-23986N"/>
<dbReference type="FunCoup" id="P20349">
    <property type="interactions" value="23"/>
</dbReference>
<dbReference type="IntAct" id="P20349">
    <property type="interactions" value="2"/>
</dbReference>
<dbReference type="STRING" id="7227.FBpp0084963"/>
<dbReference type="PaxDb" id="7227-FBpp0084963"/>
<dbReference type="DNASU" id="43568"/>
<dbReference type="EnsemblMetazoa" id="FBtr0085598">
    <property type="protein sequence ID" value="FBpp0084963"/>
    <property type="gene ID" value="FBgn0001281"/>
</dbReference>
<dbReference type="GeneID" id="43568"/>
<dbReference type="KEGG" id="dme:Dmel_CG7931"/>
<dbReference type="AGR" id="FB:FBgn0001281"/>
<dbReference type="CTD" id="43568"/>
<dbReference type="FlyBase" id="FBgn0001281">
    <property type="gene designation" value="janB"/>
</dbReference>
<dbReference type="VEuPathDB" id="VectorBase:FBgn0001281"/>
<dbReference type="GeneTree" id="ENSGT00390000002738"/>
<dbReference type="HOGENOM" id="CLU_120717_1_0_1"/>
<dbReference type="InParanoid" id="P20349"/>
<dbReference type="OMA" id="WTTYKDF"/>
<dbReference type="OrthoDB" id="10249612at2759"/>
<dbReference type="PhylomeDB" id="P20349"/>
<dbReference type="BioGRID-ORCS" id="43568">
    <property type="hits" value="0 hits in 1 CRISPR screen"/>
</dbReference>
<dbReference type="GenomeRNAi" id="43568"/>
<dbReference type="PRO" id="PR:P20349"/>
<dbReference type="Proteomes" id="UP000000803">
    <property type="component" value="Chromosome 3R"/>
</dbReference>
<dbReference type="Bgee" id="FBgn0001281">
    <property type="expression patterns" value="Expressed in early-mid elongation-stage spermatid (Drosophila) in testis and 33 other cell types or tissues"/>
</dbReference>
<dbReference type="ExpressionAtlas" id="P20349">
    <property type="expression patterns" value="baseline and differential"/>
</dbReference>
<dbReference type="GO" id="GO:0005829">
    <property type="term" value="C:cytosol"/>
    <property type="evidence" value="ECO:0000318"/>
    <property type="project" value="GO_Central"/>
</dbReference>
<dbReference type="GO" id="GO:0101006">
    <property type="term" value="F:protein histidine phosphatase activity"/>
    <property type="evidence" value="ECO:0000318"/>
    <property type="project" value="GO_Central"/>
</dbReference>
<dbReference type="GO" id="GO:0030154">
    <property type="term" value="P:cell differentiation"/>
    <property type="evidence" value="ECO:0007669"/>
    <property type="project" value="UniProtKB-KW"/>
</dbReference>
<dbReference type="GO" id="GO:0007548">
    <property type="term" value="P:sex differentiation"/>
    <property type="evidence" value="ECO:0000270"/>
    <property type="project" value="UniProtKB"/>
</dbReference>
<dbReference type="FunFam" id="3.50.20.20:FF:000002">
    <property type="entry name" value="Sex-regulated protein janus-B"/>
    <property type="match status" value="1"/>
</dbReference>
<dbReference type="Gene3D" id="3.50.20.20">
    <property type="entry name" value="Janus/Ocnus"/>
    <property type="match status" value="1"/>
</dbReference>
<dbReference type="InterPro" id="IPR007702">
    <property type="entry name" value="Janus"/>
</dbReference>
<dbReference type="InterPro" id="IPR038596">
    <property type="entry name" value="Janus_sf"/>
</dbReference>
<dbReference type="PANTHER" id="PTHR12258:SF5">
    <property type="entry name" value="BCDNA.GH02250-RELATED"/>
    <property type="match status" value="1"/>
</dbReference>
<dbReference type="PANTHER" id="PTHR12258">
    <property type="entry name" value="JANUS-A/JANUS-B"/>
    <property type="match status" value="1"/>
</dbReference>
<dbReference type="Pfam" id="PF05005">
    <property type="entry name" value="Ocnus"/>
    <property type="match status" value="1"/>
</dbReference>
<dbReference type="SUPFAM" id="SSF143724">
    <property type="entry name" value="PHP14-like"/>
    <property type="match status" value="1"/>
</dbReference>
<accession>P20349</accession>
<accession>A0ANH4</accession>
<accession>A0ANH5</accession>
<accession>A0ANH6</accession>
<accession>A0ANH7</accession>
<accession>A0ANH8</accession>
<accession>A0ANI2</accession>
<accession>Q9VAB7</accession>
<keyword id="KW-0221">Differentiation</keyword>
<keyword id="KW-1185">Reference proteome</keyword>
<keyword id="KW-0726">Sexual differentiation</keyword>
<gene>
    <name type="primary">janB</name>
    <name type="ORF">CG7931</name>
</gene>